<keyword id="KW-0637">Prenyltransferase</keyword>
<keyword id="KW-1185">Reference proteome</keyword>
<keyword id="KW-0808">Transferase</keyword>
<protein>
    <recommendedName>
        <fullName evidence="2">Aromatic prenyltransferase</fullName>
        <ecNumber evidence="1">2.5.1.-</ecNumber>
    </recommendedName>
</protein>
<reference key="1">
    <citation type="journal article" date="2011" name="PLoS Genet.">
        <title>Genomic analysis of the necrotrophic fungal pathogens Sclerotinia sclerotiorum and Botrytis cinerea.</title>
        <authorList>
            <person name="Amselem J."/>
            <person name="Cuomo C.A."/>
            <person name="van Kan J.A.L."/>
            <person name="Viaud M."/>
            <person name="Benito E.P."/>
            <person name="Couloux A."/>
            <person name="Coutinho P.M."/>
            <person name="de Vries R.P."/>
            <person name="Dyer P.S."/>
            <person name="Fillinger S."/>
            <person name="Fournier E."/>
            <person name="Gout L."/>
            <person name="Hahn M."/>
            <person name="Kohn L."/>
            <person name="Lapalu N."/>
            <person name="Plummer K.M."/>
            <person name="Pradier J.-M."/>
            <person name="Quevillon E."/>
            <person name="Sharon A."/>
            <person name="Simon A."/>
            <person name="ten Have A."/>
            <person name="Tudzynski B."/>
            <person name="Tudzynski P."/>
            <person name="Wincker P."/>
            <person name="Andrew M."/>
            <person name="Anthouard V."/>
            <person name="Beever R.E."/>
            <person name="Beffa R."/>
            <person name="Benoit I."/>
            <person name="Bouzid O."/>
            <person name="Brault B."/>
            <person name="Chen Z."/>
            <person name="Choquer M."/>
            <person name="Collemare J."/>
            <person name="Cotton P."/>
            <person name="Danchin E.G."/>
            <person name="Da Silva C."/>
            <person name="Gautier A."/>
            <person name="Giraud C."/>
            <person name="Giraud T."/>
            <person name="Gonzalez C."/>
            <person name="Grossetete S."/>
            <person name="Gueldener U."/>
            <person name="Henrissat B."/>
            <person name="Howlett B.J."/>
            <person name="Kodira C."/>
            <person name="Kretschmer M."/>
            <person name="Lappartient A."/>
            <person name="Leroch M."/>
            <person name="Levis C."/>
            <person name="Mauceli E."/>
            <person name="Neuveglise C."/>
            <person name="Oeser B."/>
            <person name="Pearson M."/>
            <person name="Poulain J."/>
            <person name="Poussereau N."/>
            <person name="Quesneville H."/>
            <person name="Rascle C."/>
            <person name="Schumacher J."/>
            <person name="Segurens B."/>
            <person name="Sexton A."/>
            <person name="Silva E."/>
            <person name="Sirven C."/>
            <person name="Soanes D.M."/>
            <person name="Talbot N.J."/>
            <person name="Templeton M."/>
            <person name="Yandava C."/>
            <person name="Yarden O."/>
            <person name="Zeng Q."/>
            <person name="Rollins J.A."/>
            <person name="Lebrun M.-H."/>
            <person name="Dickman M."/>
        </authorList>
    </citation>
    <scope>NUCLEOTIDE SEQUENCE [LARGE SCALE GENOMIC DNA]</scope>
    <source>
        <strain>B05.10</strain>
    </source>
</reference>
<reference key="2">
    <citation type="journal article" date="2012" name="Eukaryot. Cell">
        <title>Genome update of Botrytis cinerea strains B05.10 and T4.</title>
        <authorList>
            <person name="Staats M."/>
            <person name="van Kan J.A.L."/>
        </authorList>
    </citation>
    <scope>NUCLEOTIDE SEQUENCE [LARGE SCALE GENOMIC DNA]</scope>
    <source>
        <strain>B05.10</strain>
    </source>
</reference>
<reference key="3">
    <citation type="journal article" date="2017" name="Mol. Plant Pathol.">
        <title>A gapless genome sequence of the fungus Botrytis cinerea.</title>
        <authorList>
            <person name="van Kan J.A.L."/>
            <person name="Stassen J.H.M."/>
            <person name="Mosbach A."/>
            <person name="van der Lee T.A.J."/>
            <person name="Faino L."/>
            <person name="Farmer A.D."/>
            <person name="Papasotiriou D.G."/>
            <person name="Zhou S."/>
            <person name="Seidl M.F."/>
            <person name="Cottam E."/>
            <person name="Edel D."/>
            <person name="Hahn M."/>
            <person name="Schwartz D.C."/>
            <person name="Dietrich R.A."/>
            <person name="Widdison S."/>
            <person name="Scalliet G."/>
        </authorList>
    </citation>
    <scope>NUCLEOTIDE SEQUENCE [LARGE SCALE GENOMIC DNA]</scope>
    <source>
        <strain>B05.10</strain>
    </source>
</reference>
<reference key="4">
    <citation type="journal article" date="2010" name="J. Biol. Chem.">
        <title>A new group of aromatic prenyltransferases in fungi, catalyzing a 2,7-dihydroxynaphthalene 3-dimethylallyl-transferase reaction.</title>
        <authorList>
            <person name="Haug-Schifferdecker E."/>
            <person name="Arican D."/>
            <person name="Brueckner R."/>
            <person name="Heide L."/>
        </authorList>
    </citation>
    <scope>FUNCTION</scope>
    <scope>CATALYTIC ACTIVITY</scope>
    <scope>BIOPHYSICOCHEMICAL PROPERTIES</scope>
    <scope>SUBSTRATE SPECIFICITY</scope>
</reference>
<comment type="function">
    <text evidence="1">Prenyltransferase that attaches isoprenoid moieties to carbon atoms of aromatic substrates in an enzyme-catalyzed Friedel-Crafts reaction (PubMed:20351110). Shows specificity for dimethylallyl diphosphate (DMAPP) and does not accept geranyl diphosphate (GPP) or isopentenyl diphosphate (IPP) (PubMed:20351110). Prenylates the artificial substrate 2,7-dihydroxynaphthalene (2,7-DHN), as well as dihydrophenazine-1-carboxylic acid and 4-hydroxybenzoic acid at lower levels (PubMed:20351110). Only traces of products are detected with aspulvinone E or flaviolin as substrates; and no product is formed with L-tryptophan, L-tyrosine, or 4-hydroxyphenylpyruvate (PubMed:20351110). Ptf seems no to be involved in the prenylation reaction in the biosynthesis of aspulvinone H and J and the physiological function of ptf remains unknown (PubMed:20351110).</text>
</comment>
<comment type="biophysicochemical properties">
    <kinetics>
        <KM evidence="1">1010 uM for DMAPP</KM>
        <KM evidence="1">996 uM for 2,7-dihydroxynaphthalene</KM>
    </kinetics>
</comment>
<comment type="miscellaneous">
    <text evidence="1">The gene is not located within a recognizable secondary metabolic gene cluster.</text>
</comment>
<comment type="similarity">
    <text evidence="3">Belongs to the aromatic prenyltransferase family.</text>
</comment>
<feature type="chain" id="PRO_0000455462" description="Aromatic prenyltransferase">
    <location>
        <begin position="1"/>
        <end position="309"/>
    </location>
</feature>
<dbReference type="EC" id="2.5.1.-" evidence="1"/>
<dbReference type="EMBL" id="CP009810">
    <property type="protein sequence ID" value="ATZ50774.1"/>
    <property type="molecule type" value="Genomic_DNA"/>
</dbReference>
<dbReference type="RefSeq" id="XP_001560463.1">
    <property type="nucleotide sequence ID" value="XM_001560413.1"/>
</dbReference>
<dbReference type="SMR" id="A0A384JK99"/>
<dbReference type="EnsemblFungi" id="Bcin06g02600.1">
    <property type="protein sequence ID" value="Bcin06p02600.1"/>
    <property type="gene ID" value="Bcin06g02600"/>
</dbReference>
<dbReference type="GeneID" id="5441104"/>
<dbReference type="KEGG" id="bfu:BCIN_06g02600"/>
<dbReference type="VEuPathDB" id="FungiDB:Bcin06g02600"/>
<dbReference type="OMA" id="ALNYRFY"/>
<dbReference type="OrthoDB" id="3913316at2759"/>
<dbReference type="Proteomes" id="UP000001798">
    <property type="component" value="Chromosome bcin06"/>
</dbReference>
<dbReference type="GO" id="GO:0004659">
    <property type="term" value="F:prenyltransferase activity"/>
    <property type="evidence" value="ECO:0007669"/>
    <property type="project" value="UniProtKB-KW"/>
</dbReference>
<dbReference type="CDD" id="cd13931">
    <property type="entry name" value="PT-CloQ_NphB"/>
    <property type="match status" value="1"/>
</dbReference>
<dbReference type="InterPro" id="IPR033964">
    <property type="entry name" value="Aro_prenylTrfase"/>
</dbReference>
<dbReference type="InterPro" id="IPR020965">
    <property type="entry name" value="Prenyltransferase_CloQ"/>
</dbReference>
<dbReference type="InterPro" id="IPR036239">
    <property type="entry name" value="PrenylTrfase-like_sf"/>
</dbReference>
<dbReference type="Pfam" id="PF11468">
    <property type="entry name" value="PTase_Orf2"/>
    <property type="match status" value="1"/>
</dbReference>
<dbReference type="SFLD" id="SFLDS00036">
    <property type="entry name" value="Aromatic_Prenyltransferase"/>
    <property type="match status" value="1"/>
</dbReference>
<dbReference type="SFLD" id="SFLDG01163">
    <property type="entry name" value="II"/>
    <property type="match status" value="1"/>
</dbReference>
<dbReference type="SUPFAM" id="SSF143492">
    <property type="entry name" value="Prenyltransferase-like"/>
    <property type="match status" value="1"/>
</dbReference>
<evidence type="ECO:0000269" key="1">
    <source>
    </source>
</evidence>
<evidence type="ECO:0000303" key="2">
    <source>
    </source>
</evidence>
<evidence type="ECO:0000305" key="3"/>
<proteinExistence type="evidence at protein level"/>
<sequence length="309" mass="34474">MVVQAVSESLKFDQSRFLNDIQILSAAINAPYSESTTKKVLSVFSDSFHDGVVLWRATDRVGDALNYRFYSRRPIDTVTIASSAGLLSPDVVSNLGRLVTSWSSLYDGLPEESCDFDAEKGLVKAWVYMRGMRPLGDILSAEGVPESLKQHEERFKALELEKVRHVAVDYQKATVNLYFRAQGPISLQQATSFNALAGAGPPSQTQFLEMQEFLNAVGYTFAVTIRVDSGDIERVGYYALKLPDRATKNWPVINAQLEKFAQFAPSYDREEMNAVAWSFGGTKRYVKFERSYCGELVPLIKGWGTTLSS</sequence>
<gene>
    <name evidence="2" type="primary">ptf</name>
    <name type="ORF">BCIN_06g02600</name>
</gene>
<name>PTF_BOTFB</name>
<organism>
    <name type="scientific">Botryotinia fuckeliana (strain B05.10)</name>
    <name type="common">Noble rot fungus</name>
    <name type="synonym">Botrytis cinerea</name>
    <dbReference type="NCBI Taxonomy" id="332648"/>
    <lineage>
        <taxon>Eukaryota</taxon>
        <taxon>Fungi</taxon>
        <taxon>Dikarya</taxon>
        <taxon>Ascomycota</taxon>
        <taxon>Pezizomycotina</taxon>
        <taxon>Leotiomycetes</taxon>
        <taxon>Helotiales</taxon>
        <taxon>Sclerotiniaceae</taxon>
        <taxon>Botrytis</taxon>
    </lineage>
</organism>
<accession>A0A384JK99</accession>